<comment type="function">
    <text evidence="1">Oxidative deamination of D-amino acids.</text>
</comment>
<comment type="catalytic activity">
    <reaction evidence="1">
        <text>a D-alpha-amino acid + A + H2O = a 2-oxocarboxylate + AH2 + NH4(+)</text>
        <dbReference type="Rhea" id="RHEA:18125"/>
        <dbReference type="ChEBI" id="CHEBI:13193"/>
        <dbReference type="ChEBI" id="CHEBI:15377"/>
        <dbReference type="ChEBI" id="CHEBI:17499"/>
        <dbReference type="ChEBI" id="CHEBI:28938"/>
        <dbReference type="ChEBI" id="CHEBI:35179"/>
        <dbReference type="ChEBI" id="CHEBI:59871"/>
    </reaction>
</comment>
<comment type="cofactor">
    <cofactor evidence="1">
        <name>FAD</name>
        <dbReference type="ChEBI" id="CHEBI:57692"/>
    </cofactor>
</comment>
<comment type="pathway">
    <text>Amino-acid degradation; D-alanine degradation; NH(3) and pyruvate from D-alanine: step 1/1.</text>
</comment>
<comment type="similarity">
    <text evidence="1">Belongs to the DadA oxidoreductase family.</text>
</comment>
<reference key="1">
    <citation type="journal article" date="2005" name="J. Bacteriol.">
        <title>Completion of the genome sequence of Brucella abortus and comparison to the highly similar genomes of Brucella melitensis and Brucella suis.</title>
        <authorList>
            <person name="Halling S.M."/>
            <person name="Peterson-Burch B.D."/>
            <person name="Bricker B.J."/>
            <person name="Zuerner R.L."/>
            <person name="Qing Z."/>
            <person name="Li L.-L."/>
            <person name="Kapur V."/>
            <person name="Alt D.P."/>
            <person name="Olsen S.C."/>
        </authorList>
    </citation>
    <scope>NUCLEOTIDE SEQUENCE [LARGE SCALE GENOMIC DNA]</scope>
    <source>
        <strain>9-941</strain>
    </source>
</reference>
<keyword id="KW-0274">FAD</keyword>
<keyword id="KW-0285">Flavoprotein</keyword>
<keyword id="KW-0560">Oxidoreductase</keyword>
<dbReference type="EC" id="1.4.99.-" evidence="1"/>
<dbReference type="EMBL" id="AE017224">
    <property type="protein sequence ID" value="AAX75742.1"/>
    <property type="molecule type" value="Genomic_DNA"/>
</dbReference>
<dbReference type="RefSeq" id="WP_002965723.1">
    <property type="nucleotide sequence ID" value="NC_006933.1"/>
</dbReference>
<dbReference type="SMR" id="Q579E2"/>
<dbReference type="EnsemblBacteria" id="AAX75742">
    <property type="protein sequence ID" value="AAX75742"/>
    <property type="gene ID" value="BruAb2_0309"/>
</dbReference>
<dbReference type="KEGG" id="bmb:BruAb2_0309"/>
<dbReference type="HOGENOM" id="CLU_007884_9_2_5"/>
<dbReference type="UniPathway" id="UPA00043">
    <property type="reaction ID" value="UER00498"/>
</dbReference>
<dbReference type="Proteomes" id="UP000000540">
    <property type="component" value="Chromosome II"/>
</dbReference>
<dbReference type="GO" id="GO:0005737">
    <property type="term" value="C:cytoplasm"/>
    <property type="evidence" value="ECO:0007669"/>
    <property type="project" value="TreeGrafter"/>
</dbReference>
<dbReference type="GO" id="GO:0005886">
    <property type="term" value="C:plasma membrane"/>
    <property type="evidence" value="ECO:0007669"/>
    <property type="project" value="TreeGrafter"/>
</dbReference>
<dbReference type="GO" id="GO:0008718">
    <property type="term" value="F:D-amino-acid dehydrogenase activity"/>
    <property type="evidence" value="ECO:0007669"/>
    <property type="project" value="UniProtKB-UniRule"/>
</dbReference>
<dbReference type="GO" id="GO:0055130">
    <property type="term" value="P:D-alanine catabolic process"/>
    <property type="evidence" value="ECO:0007669"/>
    <property type="project" value="UniProtKB-UniPathway"/>
</dbReference>
<dbReference type="FunFam" id="3.50.50.60:FF:000020">
    <property type="entry name" value="D-amino acid dehydrogenase"/>
    <property type="match status" value="1"/>
</dbReference>
<dbReference type="Gene3D" id="3.30.9.10">
    <property type="entry name" value="D-Amino Acid Oxidase, subunit A, domain 2"/>
    <property type="match status" value="1"/>
</dbReference>
<dbReference type="Gene3D" id="3.50.50.60">
    <property type="entry name" value="FAD/NAD(P)-binding domain"/>
    <property type="match status" value="2"/>
</dbReference>
<dbReference type="HAMAP" id="MF_01202">
    <property type="entry name" value="DadA"/>
    <property type="match status" value="1"/>
</dbReference>
<dbReference type="InterPro" id="IPR023080">
    <property type="entry name" value="DadA"/>
</dbReference>
<dbReference type="InterPro" id="IPR006076">
    <property type="entry name" value="FAD-dep_OxRdtase"/>
</dbReference>
<dbReference type="InterPro" id="IPR036188">
    <property type="entry name" value="FAD/NAD-bd_sf"/>
</dbReference>
<dbReference type="NCBIfam" id="NF001933">
    <property type="entry name" value="PRK00711.1"/>
    <property type="match status" value="1"/>
</dbReference>
<dbReference type="PANTHER" id="PTHR13847:SF280">
    <property type="entry name" value="D-AMINO ACID DEHYDROGENASE"/>
    <property type="match status" value="1"/>
</dbReference>
<dbReference type="PANTHER" id="PTHR13847">
    <property type="entry name" value="SARCOSINE DEHYDROGENASE-RELATED"/>
    <property type="match status" value="1"/>
</dbReference>
<dbReference type="Pfam" id="PF01266">
    <property type="entry name" value="DAO"/>
    <property type="match status" value="1"/>
</dbReference>
<dbReference type="SUPFAM" id="SSF54373">
    <property type="entry name" value="FAD-linked reductases, C-terminal domain"/>
    <property type="match status" value="1"/>
</dbReference>
<dbReference type="SUPFAM" id="SSF51905">
    <property type="entry name" value="FAD/NAD(P)-binding domain"/>
    <property type="match status" value="1"/>
</dbReference>
<evidence type="ECO:0000255" key="1">
    <source>
        <dbReference type="HAMAP-Rule" id="MF_01202"/>
    </source>
</evidence>
<name>DADA_BRUAB</name>
<gene>
    <name evidence="1" type="primary">dadA</name>
    <name type="ordered locus">BruAb2_0309</name>
</gene>
<sequence>MQITILGSGVIGVTTAYYLAKLGHEVTVIDREEGPALETSFANAGQVSPGYASPWAAPGIPLKAAKWLFQKHAPLILRLTTDPVQYRWLLQMLANCTDSRYKINKTRMVRVAEYSRDCLIELRKDTGIEYDQRSQGTLQLFREQYQLDGIGKDIEVLRQDGVPFEVLDRDGCVNVEPALAHAKDKFVGGLRLPNDETGDCFKFTNALAKIAEGLGVKFRFGVNIKSLLMSGGKISGVETSEGIVTAERYVVALGSYTPALIKALGLNAPIYPVKGYSITAPIVDESRAPVSTVLDESYKIAITRLGDRIRVGGMAEVSGFTDDLPAARRATLDLSVTDLFPGGDLKAATFWSGLRPMTPDSTPIIGGTRYDNLFINAGHGTLGWTMACGSGRLLADLISGNKADIRADDLGIARYN</sequence>
<accession>Q579E2</accession>
<feature type="chain" id="PRO_1000066070" description="D-amino acid dehydrogenase">
    <location>
        <begin position="1"/>
        <end position="416"/>
    </location>
</feature>
<feature type="binding site" evidence="1">
    <location>
        <begin position="3"/>
        <end position="17"/>
    </location>
    <ligand>
        <name>FAD</name>
        <dbReference type="ChEBI" id="CHEBI:57692"/>
    </ligand>
</feature>
<proteinExistence type="inferred from homology"/>
<organism>
    <name type="scientific">Brucella abortus biovar 1 (strain 9-941)</name>
    <dbReference type="NCBI Taxonomy" id="262698"/>
    <lineage>
        <taxon>Bacteria</taxon>
        <taxon>Pseudomonadati</taxon>
        <taxon>Pseudomonadota</taxon>
        <taxon>Alphaproteobacteria</taxon>
        <taxon>Hyphomicrobiales</taxon>
        <taxon>Brucellaceae</taxon>
        <taxon>Brucella/Ochrobactrum group</taxon>
        <taxon>Brucella</taxon>
    </lineage>
</organism>
<protein>
    <recommendedName>
        <fullName evidence="1">D-amino acid dehydrogenase</fullName>
        <ecNumber evidence="1">1.4.99.-</ecNumber>
    </recommendedName>
</protein>